<gene>
    <name type="primary">SGCA</name>
</gene>
<accession>Q64255</accession>
<reference key="1">
    <citation type="journal article" date="1997" name="Proc. Natl. Acad. Sci. U.S.A.">
        <title>Both hypertrophic and dilated cardiomyopathies are caused by mutation of the same gene, delta-sarcoglycan, in hamster: an animal model of disrupted dystrophin-associated glycoprotein complex.</title>
        <authorList>
            <person name="Sakamoto A."/>
            <person name="Ono K."/>
            <person name="Abe M."/>
            <person name="Jasmin G."/>
            <person name="Eki T."/>
            <person name="Murakami Y."/>
            <person name="Masaki T."/>
            <person name="Toyo-oka T."/>
            <person name="Hanaoka F."/>
        </authorList>
    </citation>
    <scope>NUCLEOTIDE SEQUENCE [MRNA]</scope>
    <source>
        <strain>Syrian</strain>
        <tissue>Heart muscle</tissue>
    </source>
</reference>
<reference key="2">
    <citation type="journal article" date="1995" name="FEBS Lett.">
        <title>Adhalin mRNA and cDNA sequence are normal in the cardiomyopathic hamster.</title>
        <authorList>
            <person name="Roberds S.L."/>
            <person name="Campbell K.P."/>
        </authorList>
    </citation>
    <scope>NUCLEOTIDE SEQUENCE [MRNA]</scope>
    <source>
        <strain>F1B</strain>
        <tissue>Skeletal muscle</tissue>
    </source>
</reference>
<proteinExistence type="evidence at transcript level"/>
<keyword id="KW-1003">Cell membrane</keyword>
<keyword id="KW-0963">Cytoplasm</keyword>
<keyword id="KW-0206">Cytoskeleton</keyword>
<keyword id="KW-0325">Glycoprotein</keyword>
<keyword id="KW-0472">Membrane</keyword>
<keyword id="KW-0597">Phosphoprotein</keyword>
<keyword id="KW-1185">Reference proteome</keyword>
<keyword id="KW-0732">Signal</keyword>
<keyword id="KW-0812">Transmembrane</keyword>
<keyword id="KW-1133">Transmembrane helix</keyword>
<sequence>MAATLTWILLFVGLLAGLRDTKAQQTTLYPLVGRVFVHPLEHATFLRLPEHIAVPPTVRLTYQAHLQGHPDLPRWLRYTQRSPYSPGFLYGTPTPEDRGRQVIEVTAYNRDSFDTTRQRLLLLIEDPEGPRLPYQAEFLVRSHDVEEVLPSTPANRFLTALGGLWELGELQLLNITSALDRGGRVPLPIEGRKEGVYIKVGSATPFSTCLKMVASPDSYARCAQGQPPLLSCYDSLAPHFRVDWCNVSLVDKSVPEPLDEVPTPGDGILEHDPFFCPPTEATGRDFLADALVTLLVPLLVALLLTLLLAYIMCCRREGQLKRDMATSDIQMVHHCTIHGNTEELRQMAARREVPRPLSTLPMFNVRTGERLPPRVDSAQVPLILDQH</sequence>
<dbReference type="EMBL" id="D83651">
    <property type="protein sequence ID" value="BAA12025.1"/>
    <property type="molecule type" value="mRNA"/>
</dbReference>
<dbReference type="EMBL" id="U21677">
    <property type="protein sequence ID" value="AAA81645.1"/>
    <property type="molecule type" value="mRNA"/>
</dbReference>
<dbReference type="PIR" id="I48201">
    <property type="entry name" value="I48201"/>
</dbReference>
<dbReference type="RefSeq" id="NP_001268592.1">
    <property type="nucleotide sequence ID" value="NM_001281663.1"/>
</dbReference>
<dbReference type="SMR" id="Q64255"/>
<dbReference type="STRING" id="10036.ENSMAUP00000008480"/>
<dbReference type="GlyCosmos" id="Q64255">
    <property type="glycosylation" value="2 sites, No reported glycans"/>
</dbReference>
<dbReference type="Ensembl" id="ENSMAUT00000012306">
    <property type="protein sequence ID" value="ENSMAUP00000008480"/>
    <property type="gene ID" value="ENSMAUG00000009888"/>
</dbReference>
<dbReference type="GeneID" id="101822397"/>
<dbReference type="KEGG" id="maua:101822397"/>
<dbReference type="CTD" id="6442"/>
<dbReference type="eggNOG" id="KOG4482">
    <property type="taxonomic scope" value="Eukaryota"/>
</dbReference>
<dbReference type="OrthoDB" id="10019906at2759"/>
<dbReference type="Proteomes" id="UP000189706">
    <property type="component" value="Unplaced"/>
</dbReference>
<dbReference type="GO" id="GO:0005911">
    <property type="term" value="C:cell-cell junction"/>
    <property type="evidence" value="ECO:0007669"/>
    <property type="project" value="Ensembl"/>
</dbReference>
<dbReference type="GO" id="GO:0005737">
    <property type="term" value="C:cytoplasm"/>
    <property type="evidence" value="ECO:0007669"/>
    <property type="project" value="UniProtKB-KW"/>
</dbReference>
<dbReference type="GO" id="GO:0005856">
    <property type="term" value="C:cytoskeleton"/>
    <property type="evidence" value="ECO:0007669"/>
    <property type="project" value="UniProtKB-SubCell"/>
</dbReference>
<dbReference type="GO" id="GO:0045121">
    <property type="term" value="C:membrane raft"/>
    <property type="evidence" value="ECO:0007669"/>
    <property type="project" value="Ensembl"/>
</dbReference>
<dbReference type="GO" id="GO:0016012">
    <property type="term" value="C:sarcoglycan complex"/>
    <property type="evidence" value="ECO:0007669"/>
    <property type="project" value="Ensembl"/>
</dbReference>
<dbReference type="GO" id="GO:0042383">
    <property type="term" value="C:sarcolemma"/>
    <property type="evidence" value="ECO:0007669"/>
    <property type="project" value="UniProtKB-SubCell"/>
</dbReference>
<dbReference type="GO" id="GO:0005509">
    <property type="term" value="F:calcium ion binding"/>
    <property type="evidence" value="ECO:0007669"/>
    <property type="project" value="InterPro"/>
</dbReference>
<dbReference type="Gene3D" id="2.60.40.10">
    <property type="entry name" value="Immunoglobulins"/>
    <property type="match status" value="1"/>
</dbReference>
<dbReference type="InterPro" id="IPR006644">
    <property type="entry name" value="Cadg"/>
</dbReference>
<dbReference type="InterPro" id="IPR015919">
    <property type="entry name" value="Cadherin-like_sf"/>
</dbReference>
<dbReference type="InterPro" id="IPR013783">
    <property type="entry name" value="Ig-like_fold"/>
</dbReference>
<dbReference type="InterPro" id="IPR008908">
    <property type="entry name" value="Sarcoglycan_alpha/epsilon"/>
</dbReference>
<dbReference type="InterPro" id="IPR048347">
    <property type="entry name" value="Sarcoglycan_C"/>
</dbReference>
<dbReference type="InterPro" id="IPR048346">
    <property type="entry name" value="Sarcoglycan_N"/>
</dbReference>
<dbReference type="PANTHER" id="PTHR10132">
    <property type="entry name" value="ALPHA-/EPSILON-SARCOGLYCAN FAMILY MEMBER"/>
    <property type="match status" value="1"/>
</dbReference>
<dbReference type="PANTHER" id="PTHR10132:SF16">
    <property type="entry name" value="ALPHA-SARCOGLYCAN"/>
    <property type="match status" value="1"/>
</dbReference>
<dbReference type="Pfam" id="PF05510">
    <property type="entry name" value="Sarcoglycan_2"/>
    <property type="match status" value="1"/>
</dbReference>
<dbReference type="Pfam" id="PF20989">
    <property type="entry name" value="Sarcoglycan_2_C"/>
    <property type="match status" value="1"/>
</dbReference>
<dbReference type="SMART" id="SM00736">
    <property type="entry name" value="CADG"/>
    <property type="match status" value="1"/>
</dbReference>
<dbReference type="SUPFAM" id="SSF49313">
    <property type="entry name" value="Cadherin-like"/>
    <property type="match status" value="1"/>
</dbReference>
<protein>
    <recommendedName>
        <fullName>Alpha-sarcoglycan</fullName>
        <shortName>Alpha-SG</shortName>
    </recommendedName>
    <alternativeName>
        <fullName>50 kDa dystrophin-associated glycoprotein</fullName>
        <shortName>50DAG</shortName>
    </alternativeName>
    <alternativeName>
        <fullName>Adhalin</fullName>
    </alternativeName>
</protein>
<name>SGCA_MESAU</name>
<feature type="signal peptide" evidence="3">
    <location>
        <begin position="1"/>
        <end position="23"/>
    </location>
</feature>
<feature type="chain" id="PRO_0000031674" description="Alpha-sarcoglycan">
    <location>
        <begin position="24"/>
        <end position="387"/>
    </location>
</feature>
<feature type="topological domain" description="Extracellular" evidence="3">
    <location>
        <begin position="24"/>
        <end position="290"/>
    </location>
</feature>
<feature type="transmembrane region" description="Helical" evidence="3">
    <location>
        <begin position="291"/>
        <end position="311"/>
    </location>
</feature>
<feature type="topological domain" description="Cytoplasmic" evidence="3">
    <location>
        <begin position="312"/>
        <end position="387"/>
    </location>
</feature>
<feature type="modified residue" description="Phosphoserine" evidence="2">
    <location>
        <position position="377"/>
    </location>
</feature>
<feature type="glycosylation site" description="N-linked (GlcNAc...) asparagine" evidence="3">
    <location>
        <position position="174"/>
    </location>
</feature>
<feature type="glycosylation site" description="N-linked (GlcNAc...) asparagine" evidence="3">
    <location>
        <position position="246"/>
    </location>
</feature>
<organism>
    <name type="scientific">Mesocricetus auratus</name>
    <name type="common">Golden hamster</name>
    <dbReference type="NCBI Taxonomy" id="10036"/>
    <lineage>
        <taxon>Eukaryota</taxon>
        <taxon>Metazoa</taxon>
        <taxon>Chordata</taxon>
        <taxon>Craniata</taxon>
        <taxon>Vertebrata</taxon>
        <taxon>Euteleostomi</taxon>
        <taxon>Mammalia</taxon>
        <taxon>Eutheria</taxon>
        <taxon>Euarchontoglires</taxon>
        <taxon>Glires</taxon>
        <taxon>Rodentia</taxon>
        <taxon>Myomorpha</taxon>
        <taxon>Muroidea</taxon>
        <taxon>Cricetidae</taxon>
        <taxon>Cricetinae</taxon>
        <taxon>Mesocricetus</taxon>
    </lineage>
</organism>
<evidence type="ECO:0000250" key="1"/>
<evidence type="ECO:0000250" key="2">
    <source>
        <dbReference type="UniProtKB" id="P82350"/>
    </source>
</evidence>
<evidence type="ECO:0000255" key="3"/>
<evidence type="ECO:0000305" key="4"/>
<comment type="function">
    <text>Component of the sarcoglycan complex, a subcomplex of the dystrophin-glycoprotein complex which forms a link between the F-actin cytoskeleton and the extracellular matrix.</text>
</comment>
<comment type="subunit">
    <text evidence="1">Interacts with the syntrophin SNTA1. Cross-link to form 2 major subcomplexes: one consisting of SGCB, SGCD and SGCG and the other consisting of SGCB and SGCD. The association between SGCB and SGCG is particularly strong while SGCA is loosely associated with the other sarcoglycans (By similarity).</text>
</comment>
<comment type="subcellular location">
    <subcellularLocation>
        <location evidence="1">Cell membrane</location>
        <location evidence="1">Sarcolemma</location>
        <topology evidence="1">Single-pass type I membrane protein</topology>
    </subcellularLocation>
    <subcellularLocation>
        <location evidence="1">Cytoplasm</location>
        <location evidence="1">Cytoskeleton</location>
    </subcellularLocation>
</comment>
<comment type="tissue specificity">
    <text>Strongly expressed in skeletal and heart muscle.</text>
</comment>
<comment type="similarity">
    <text evidence="4">Belongs to the sarcoglycan alpha/epsilon family.</text>
</comment>